<evidence type="ECO:0000255" key="1">
    <source>
        <dbReference type="HAMAP-Rule" id="MF_00117"/>
    </source>
</evidence>
<protein>
    <recommendedName>
        <fullName evidence="1">33 kDa chaperonin</fullName>
    </recommendedName>
    <alternativeName>
        <fullName evidence="1">Heat shock protein 33 homolog</fullName>
        <shortName evidence="1">HSP33</shortName>
    </alternativeName>
</protein>
<sequence length="293" mass="32478">MSNHDQLHRYLFANHAVRGELVSVNETYQQVLANHDYPPAVQKLLGEMLVATSLLTATLKFDGDITVQLQGGDGPLTLAVINGNNRQEMRGVARVKGEISDDSTLQEMVGNGYLVITITPAQGERYQGVVALEGETIAACLENYFMQSEQLPTRLFIRTGHVADKAAAGGMLLQVLPAQERNEDEFDHLAQLTATIKAEELFTLPANEVLYRLYHQEEVTLYEPQNVSFRCTCSRQRCADALVTLADDDVTEMLEQDGNIDMHCEYCGNHYLFDAVDIATLKNGNSASSEQIH</sequence>
<proteinExistence type="inferred from homology"/>
<organism>
    <name type="scientific">Yersinia pseudotuberculosis serotype O:1b (strain IP 31758)</name>
    <dbReference type="NCBI Taxonomy" id="349747"/>
    <lineage>
        <taxon>Bacteria</taxon>
        <taxon>Pseudomonadati</taxon>
        <taxon>Pseudomonadota</taxon>
        <taxon>Gammaproteobacteria</taxon>
        <taxon>Enterobacterales</taxon>
        <taxon>Yersiniaceae</taxon>
        <taxon>Yersinia</taxon>
    </lineage>
</organism>
<comment type="function">
    <text evidence="1">Redox regulated molecular chaperone. Protects both thermally unfolding and oxidatively damaged proteins from irreversible aggregation. Plays an important role in the bacterial defense system toward oxidative stress.</text>
</comment>
<comment type="subcellular location">
    <subcellularLocation>
        <location evidence="1">Cytoplasm</location>
    </subcellularLocation>
</comment>
<comment type="PTM">
    <text evidence="1">Under oxidizing conditions two disulfide bonds are formed involving the reactive cysteines. Under reducing conditions zinc is bound to the reactive cysteines and the protein is inactive.</text>
</comment>
<comment type="similarity">
    <text evidence="1">Belongs to the HSP33 family.</text>
</comment>
<name>HSLO_YERP3</name>
<keyword id="KW-0143">Chaperone</keyword>
<keyword id="KW-0963">Cytoplasm</keyword>
<keyword id="KW-1015">Disulfide bond</keyword>
<keyword id="KW-0676">Redox-active center</keyword>
<keyword id="KW-0862">Zinc</keyword>
<accession>A7FNU7</accession>
<feature type="chain" id="PRO_1000057788" description="33 kDa chaperonin">
    <location>
        <begin position="1"/>
        <end position="293"/>
    </location>
</feature>
<feature type="disulfide bond" description="Redox-active" evidence="1">
    <location>
        <begin position="231"/>
        <end position="233"/>
    </location>
</feature>
<feature type="disulfide bond" description="Redox-active" evidence="1">
    <location>
        <begin position="264"/>
        <end position="267"/>
    </location>
</feature>
<gene>
    <name evidence="1" type="primary">hslO</name>
    <name type="ordered locus">YpsIP31758_3977</name>
</gene>
<dbReference type="EMBL" id="CP000720">
    <property type="protein sequence ID" value="ABS47949.1"/>
    <property type="molecule type" value="Genomic_DNA"/>
</dbReference>
<dbReference type="RefSeq" id="WP_002208911.1">
    <property type="nucleotide sequence ID" value="NC_009708.1"/>
</dbReference>
<dbReference type="SMR" id="A7FNU7"/>
<dbReference type="GeneID" id="57974461"/>
<dbReference type="KEGG" id="ypi:YpsIP31758_3977"/>
<dbReference type="HOGENOM" id="CLU_054493_0_0_6"/>
<dbReference type="Proteomes" id="UP000002412">
    <property type="component" value="Chromosome"/>
</dbReference>
<dbReference type="GO" id="GO:0005737">
    <property type="term" value="C:cytoplasm"/>
    <property type="evidence" value="ECO:0007669"/>
    <property type="project" value="UniProtKB-SubCell"/>
</dbReference>
<dbReference type="GO" id="GO:0044183">
    <property type="term" value="F:protein folding chaperone"/>
    <property type="evidence" value="ECO:0007669"/>
    <property type="project" value="TreeGrafter"/>
</dbReference>
<dbReference type="GO" id="GO:0051082">
    <property type="term" value="F:unfolded protein binding"/>
    <property type="evidence" value="ECO:0007669"/>
    <property type="project" value="UniProtKB-UniRule"/>
</dbReference>
<dbReference type="GO" id="GO:0042026">
    <property type="term" value="P:protein refolding"/>
    <property type="evidence" value="ECO:0007669"/>
    <property type="project" value="TreeGrafter"/>
</dbReference>
<dbReference type="CDD" id="cd00498">
    <property type="entry name" value="Hsp33"/>
    <property type="match status" value="1"/>
</dbReference>
<dbReference type="Gene3D" id="1.10.287.480">
    <property type="entry name" value="helix hairpin bin"/>
    <property type="match status" value="1"/>
</dbReference>
<dbReference type="Gene3D" id="3.55.30.10">
    <property type="entry name" value="Hsp33 domain"/>
    <property type="match status" value="1"/>
</dbReference>
<dbReference type="Gene3D" id="3.90.1280.10">
    <property type="entry name" value="HSP33 redox switch-like"/>
    <property type="match status" value="1"/>
</dbReference>
<dbReference type="HAMAP" id="MF_00117">
    <property type="entry name" value="HslO"/>
    <property type="match status" value="1"/>
</dbReference>
<dbReference type="InterPro" id="IPR000397">
    <property type="entry name" value="Heat_shock_Hsp33"/>
</dbReference>
<dbReference type="InterPro" id="IPR016154">
    <property type="entry name" value="Heat_shock_Hsp33_C"/>
</dbReference>
<dbReference type="InterPro" id="IPR016153">
    <property type="entry name" value="Heat_shock_Hsp33_N"/>
</dbReference>
<dbReference type="InterPro" id="IPR023212">
    <property type="entry name" value="Hsp33_helix_hairpin_bin_dom_sf"/>
</dbReference>
<dbReference type="NCBIfam" id="NF001033">
    <property type="entry name" value="PRK00114.1"/>
    <property type="match status" value="1"/>
</dbReference>
<dbReference type="PANTHER" id="PTHR30111">
    <property type="entry name" value="33 KDA CHAPERONIN"/>
    <property type="match status" value="1"/>
</dbReference>
<dbReference type="PANTHER" id="PTHR30111:SF1">
    <property type="entry name" value="33 KDA CHAPERONIN"/>
    <property type="match status" value="1"/>
</dbReference>
<dbReference type="Pfam" id="PF01430">
    <property type="entry name" value="HSP33"/>
    <property type="match status" value="1"/>
</dbReference>
<dbReference type="PIRSF" id="PIRSF005261">
    <property type="entry name" value="Heat_shock_Hsp33"/>
    <property type="match status" value="1"/>
</dbReference>
<dbReference type="SUPFAM" id="SSF64397">
    <property type="entry name" value="Hsp33 domain"/>
    <property type="match status" value="1"/>
</dbReference>
<dbReference type="SUPFAM" id="SSF118352">
    <property type="entry name" value="HSP33 redox switch-like"/>
    <property type="match status" value="1"/>
</dbReference>
<reference key="1">
    <citation type="journal article" date="2007" name="PLoS Genet.">
        <title>The complete genome sequence of Yersinia pseudotuberculosis IP31758, the causative agent of Far East scarlet-like fever.</title>
        <authorList>
            <person name="Eppinger M."/>
            <person name="Rosovitz M.J."/>
            <person name="Fricke W.F."/>
            <person name="Rasko D.A."/>
            <person name="Kokorina G."/>
            <person name="Fayolle C."/>
            <person name="Lindler L.E."/>
            <person name="Carniel E."/>
            <person name="Ravel J."/>
        </authorList>
    </citation>
    <scope>NUCLEOTIDE SEQUENCE [LARGE SCALE GENOMIC DNA]</scope>
    <source>
        <strain>IP 31758</strain>
    </source>
</reference>